<gene>
    <name type="primary">MB</name>
</gene>
<feature type="initiator methionine" description="Removed" evidence="8">
    <location>
        <position position="1"/>
    </location>
</feature>
<feature type="chain" id="PRO_0000053323" description="Myoglobin">
    <location>
        <begin position="2"/>
        <end position="154"/>
    </location>
</feature>
<feature type="domain" description="Globin" evidence="7">
    <location>
        <begin position="2"/>
        <end position="148"/>
    </location>
</feature>
<feature type="binding site" evidence="5">
    <location>
        <position position="65"/>
    </location>
    <ligand>
        <name>nitrite</name>
        <dbReference type="ChEBI" id="CHEBI:16301"/>
    </ligand>
</feature>
<feature type="binding site" evidence="3 7">
    <location>
        <position position="65"/>
    </location>
    <ligand>
        <name>O2</name>
        <dbReference type="ChEBI" id="CHEBI:15379"/>
    </ligand>
</feature>
<feature type="binding site" description="proximal binding residue" evidence="1">
    <location>
        <position position="94"/>
    </location>
    <ligand>
        <name>heme b</name>
        <dbReference type="ChEBI" id="CHEBI:60344"/>
    </ligand>
    <ligandPart>
        <name>Fe</name>
        <dbReference type="ChEBI" id="CHEBI:18248"/>
    </ligandPart>
</feature>
<feature type="modified residue" description="Phosphoserine" evidence="6">
    <location>
        <position position="4"/>
    </location>
</feature>
<feature type="modified residue" description="Phosphothreonine" evidence="4">
    <location>
        <position position="68"/>
    </location>
</feature>
<keyword id="KW-0963">Cytoplasm</keyword>
<keyword id="KW-0903">Direct protein sequencing</keyword>
<keyword id="KW-0349">Heme</keyword>
<keyword id="KW-0408">Iron</keyword>
<keyword id="KW-0479">Metal-binding</keyword>
<keyword id="KW-0514">Muscle protein</keyword>
<keyword id="KW-0560">Oxidoreductase</keyword>
<keyword id="KW-0561">Oxygen transport</keyword>
<keyword id="KW-0597">Phosphoprotein</keyword>
<keyword id="KW-0813">Transport</keyword>
<name>MYG_ONDZI</name>
<sequence length="154" mass="17268">MGLSDGEWQLVLHVWGKVEADLAGHGQDVLIRLFKAHPETLEKFDKFKHIKSEDEMKGSEDLKKHGBTVLTALGGILKKKGHHEAEIKPLAQSHATKHKIPIKYLEFISEAIIHVLZSKHPSBFGADVZGAMKRALELFRNDIAAKYKELGFQG</sequence>
<accession>P32428</accession>
<organism>
    <name type="scientific">Ondatra zibethicus</name>
    <name type="common">Muskrat</name>
    <dbReference type="NCBI Taxonomy" id="10060"/>
    <lineage>
        <taxon>Eukaryota</taxon>
        <taxon>Metazoa</taxon>
        <taxon>Chordata</taxon>
        <taxon>Craniata</taxon>
        <taxon>Vertebrata</taxon>
        <taxon>Euteleostomi</taxon>
        <taxon>Mammalia</taxon>
        <taxon>Eutheria</taxon>
        <taxon>Euarchontoglires</taxon>
        <taxon>Glires</taxon>
        <taxon>Rodentia</taxon>
        <taxon>Myomorpha</taxon>
        <taxon>Muroidea</taxon>
        <taxon>Cricetidae</taxon>
        <taxon>Arvicolinae</taxon>
        <taxon>Ondatra</taxon>
    </lineage>
</organism>
<proteinExistence type="evidence at protein level"/>
<reference key="1">
    <citation type="journal article" date="1989" name="Biokhimiia">
        <title>Amino acid sequence of muskrat (Ondatra zibethica) myoglobin. Characteristic features of the myoglobins of animals leading a semiaquatic way of life.</title>
        <authorList>
            <person name="Sukhomlinov B.F."/>
            <person name="Vasil'eva V.A."/>
        </authorList>
    </citation>
    <scope>PROTEIN SEQUENCE OF 2-154</scope>
</reference>
<protein>
    <recommendedName>
        <fullName>Myoglobin</fullName>
    </recommendedName>
    <alternativeName>
        <fullName evidence="1">Nitrite reductase MB</fullName>
        <ecNumber evidence="1">1.7.-.-</ecNumber>
    </alternativeName>
    <alternativeName>
        <fullName evidence="1">Pseudoperoxidase MB</fullName>
        <ecNumber evidence="1">1.11.1.-</ecNumber>
    </alternativeName>
</protein>
<dbReference type="EC" id="1.7.-.-" evidence="1"/>
<dbReference type="EC" id="1.11.1.-" evidence="1"/>
<dbReference type="PIR" id="PN0126">
    <property type="entry name" value="PN0126"/>
</dbReference>
<dbReference type="GO" id="GO:0070062">
    <property type="term" value="C:extracellular exosome"/>
    <property type="evidence" value="ECO:0007669"/>
    <property type="project" value="TreeGrafter"/>
</dbReference>
<dbReference type="GO" id="GO:0016528">
    <property type="term" value="C:sarcoplasm"/>
    <property type="evidence" value="ECO:0000250"/>
    <property type="project" value="UniProtKB"/>
</dbReference>
<dbReference type="GO" id="GO:0020037">
    <property type="term" value="F:heme binding"/>
    <property type="evidence" value="ECO:0007669"/>
    <property type="project" value="InterPro"/>
</dbReference>
<dbReference type="GO" id="GO:0046872">
    <property type="term" value="F:metal ion binding"/>
    <property type="evidence" value="ECO:0007669"/>
    <property type="project" value="UniProtKB-KW"/>
</dbReference>
<dbReference type="GO" id="GO:0098809">
    <property type="term" value="F:nitrite reductase activity"/>
    <property type="evidence" value="ECO:0000250"/>
    <property type="project" value="UniProtKB"/>
</dbReference>
<dbReference type="GO" id="GO:0019825">
    <property type="term" value="F:oxygen binding"/>
    <property type="evidence" value="ECO:0007669"/>
    <property type="project" value="InterPro"/>
</dbReference>
<dbReference type="GO" id="GO:0005344">
    <property type="term" value="F:oxygen carrier activity"/>
    <property type="evidence" value="ECO:0000250"/>
    <property type="project" value="UniProtKB"/>
</dbReference>
<dbReference type="GO" id="GO:0004601">
    <property type="term" value="F:peroxidase activity"/>
    <property type="evidence" value="ECO:0000250"/>
    <property type="project" value="UniProtKB"/>
</dbReference>
<dbReference type="GO" id="GO:0019430">
    <property type="term" value="P:removal of superoxide radicals"/>
    <property type="evidence" value="ECO:0000250"/>
    <property type="project" value="UniProtKB"/>
</dbReference>
<dbReference type="CDD" id="cd08926">
    <property type="entry name" value="Mb"/>
    <property type="match status" value="1"/>
</dbReference>
<dbReference type="Gene3D" id="6.10.140.2100">
    <property type="match status" value="1"/>
</dbReference>
<dbReference type="Gene3D" id="6.10.140.2110">
    <property type="match status" value="1"/>
</dbReference>
<dbReference type="InterPro" id="IPR000971">
    <property type="entry name" value="Globin"/>
</dbReference>
<dbReference type="InterPro" id="IPR009050">
    <property type="entry name" value="Globin-like_sf"/>
</dbReference>
<dbReference type="InterPro" id="IPR002335">
    <property type="entry name" value="Myoglobin"/>
</dbReference>
<dbReference type="PANTHER" id="PTHR47132">
    <property type="entry name" value="MYOGLOBIN"/>
    <property type="match status" value="1"/>
</dbReference>
<dbReference type="PANTHER" id="PTHR47132:SF1">
    <property type="entry name" value="MYOGLOBIN"/>
    <property type="match status" value="1"/>
</dbReference>
<dbReference type="Pfam" id="PF00042">
    <property type="entry name" value="Globin"/>
    <property type="match status" value="1"/>
</dbReference>
<dbReference type="PRINTS" id="PR00613">
    <property type="entry name" value="MYOGLOBIN"/>
</dbReference>
<dbReference type="SUPFAM" id="SSF46458">
    <property type="entry name" value="Globin-like"/>
    <property type="match status" value="1"/>
</dbReference>
<dbReference type="PROSITE" id="PS01033">
    <property type="entry name" value="GLOBIN"/>
    <property type="match status" value="1"/>
</dbReference>
<evidence type="ECO:0000250" key="1">
    <source>
        <dbReference type="UniProtKB" id="P02144"/>
    </source>
</evidence>
<evidence type="ECO:0000250" key="2">
    <source>
        <dbReference type="UniProtKB" id="P02185"/>
    </source>
</evidence>
<evidence type="ECO:0000250" key="3">
    <source>
        <dbReference type="UniProtKB" id="P02189"/>
    </source>
</evidence>
<evidence type="ECO:0000250" key="4">
    <source>
        <dbReference type="UniProtKB" id="P04247"/>
    </source>
</evidence>
<evidence type="ECO:0000250" key="5">
    <source>
        <dbReference type="UniProtKB" id="P68082"/>
    </source>
</evidence>
<evidence type="ECO:0000250" key="6">
    <source>
        <dbReference type="UniProtKB" id="Q9QZ76"/>
    </source>
</evidence>
<evidence type="ECO:0000255" key="7">
    <source>
        <dbReference type="PROSITE-ProRule" id="PRU00238"/>
    </source>
</evidence>
<evidence type="ECO:0000269" key="8">
    <source>
    </source>
</evidence>
<comment type="function">
    <text evidence="1">Monomeric heme protein which primary function is to store oxygen and facilitate its diffusion within muscle tissues. Reversibly binds oxygen through a pentacoordinated heme iron and enables its timely and efficient release as needed during periods of heightened demand. Depending on the oxidative conditions of tissues and cells, and in addition to its ability to bind oxygen, it also has a nitrite reductase activity whereby it regulates the production of bioactive nitric oxide. Under stress conditions, like hypoxia and anoxia, it also protects cells against reactive oxygen species thanks to its pseudoperoxidase activity.</text>
</comment>
<comment type="catalytic activity">
    <reaction evidence="1">
        <text>Fe(III)-heme b-[protein] + nitric oxide + H2O = Fe(II)-heme b-[protein] + nitrite + 2 H(+)</text>
        <dbReference type="Rhea" id="RHEA:77711"/>
        <dbReference type="Rhea" id="RHEA-COMP:18975"/>
        <dbReference type="Rhea" id="RHEA-COMP:18976"/>
        <dbReference type="ChEBI" id="CHEBI:15377"/>
        <dbReference type="ChEBI" id="CHEBI:15378"/>
        <dbReference type="ChEBI" id="CHEBI:16301"/>
        <dbReference type="ChEBI" id="CHEBI:16480"/>
        <dbReference type="ChEBI" id="CHEBI:55376"/>
        <dbReference type="ChEBI" id="CHEBI:60344"/>
    </reaction>
    <physiologicalReaction direction="right-to-left" evidence="1">
        <dbReference type="Rhea" id="RHEA:77713"/>
    </physiologicalReaction>
</comment>
<comment type="catalytic activity">
    <reaction evidence="1">
        <text>H2O2 + AH2 = A + 2 H2O</text>
        <dbReference type="Rhea" id="RHEA:30275"/>
        <dbReference type="ChEBI" id="CHEBI:13193"/>
        <dbReference type="ChEBI" id="CHEBI:15377"/>
        <dbReference type="ChEBI" id="CHEBI:16240"/>
        <dbReference type="ChEBI" id="CHEBI:17499"/>
    </reaction>
</comment>
<comment type="subunit">
    <text evidence="2">Monomeric.</text>
</comment>
<comment type="subcellular location">
    <subcellularLocation>
        <location evidence="1">Cytoplasm</location>
        <location evidence="1">Sarcoplasm</location>
    </subcellularLocation>
</comment>
<comment type="similarity">
    <text evidence="7">Belongs to the globin family.</text>
</comment>